<comment type="function">
    <text evidence="1">Part of the high-affinity ATP-driven potassium transport (or Kdp) system, which catalyzes the hydrolysis of ATP coupled with the electrogenic transport of potassium into the cytoplasm. This subunit binds the periplasmic potassium ions and delivers the ions to the membrane domain of KdpB through an intramembrane tunnel.</text>
</comment>
<comment type="subunit">
    <text evidence="1">The system is composed of three essential subunits: KdpA, KdpB and KdpC.</text>
</comment>
<comment type="subcellular location">
    <subcellularLocation>
        <location evidence="1">Cell inner membrane</location>
        <topology evidence="1">Multi-pass membrane protein</topology>
    </subcellularLocation>
</comment>
<comment type="similarity">
    <text evidence="1">Belongs to the KdpA family.</text>
</comment>
<name>KDPA_ECOBW</name>
<organism>
    <name type="scientific">Escherichia coli (strain K12 / MC4100 / BW2952)</name>
    <dbReference type="NCBI Taxonomy" id="595496"/>
    <lineage>
        <taxon>Bacteria</taxon>
        <taxon>Pseudomonadati</taxon>
        <taxon>Pseudomonadota</taxon>
        <taxon>Gammaproteobacteria</taxon>
        <taxon>Enterobacterales</taxon>
        <taxon>Enterobacteriaceae</taxon>
        <taxon>Escherichia</taxon>
    </lineage>
</organism>
<evidence type="ECO:0000255" key="1">
    <source>
        <dbReference type="HAMAP-Rule" id="MF_00275"/>
    </source>
</evidence>
<proteinExistence type="inferred from homology"/>
<dbReference type="EMBL" id="CP001396">
    <property type="protein sequence ID" value="ACR64081.1"/>
    <property type="molecule type" value="Genomic_DNA"/>
</dbReference>
<dbReference type="RefSeq" id="WP_000741129.1">
    <property type="nucleotide sequence ID" value="NC_012759.1"/>
</dbReference>
<dbReference type="SMR" id="C4ZWH4"/>
<dbReference type="KEGG" id="ebw:BWG_0558"/>
<dbReference type="HOGENOM" id="CLU_018614_3_0_6"/>
<dbReference type="GO" id="GO:0005886">
    <property type="term" value="C:plasma membrane"/>
    <property type="evidence" value="ECO:0007669"/>
    <property type="project" value="UniProtKB-SubCell"/>
</dbReference>
<dbReference type="GO" id="GO:0008556">
    <property type="term" value="F:P-type potassium transmembrane transporter activity"/>
    <property type="evidence" value="ECO:0007669"/>
    <property type="project" value="InterPro"/>
</dbReference>
<dbReference type="GO" id="GO:0030955">
    <property type="term" value="F:potassium ion binding"/>
    <property type="evidence" value="ECO:0007669"/>
    <property type="project" value="UniProtKB-UniRule"/>
</dbReference>
<dbReference type="HAMAP" id="MF_00275">
    <property type="entry name" value="KdpA"/>
    <property type="match status" value="1"/>
</dbReference>
<dbReference type="InterPro" id="IPR004623">
    <property type="entry name" value="KdpA"/>
</dbReference>
<dbReference type="NCBIfam" id="TIGR00680">
    <property type="entry name" value="kdpA"/>
    <property type="match status" value="1"/>
</dbReference>
<dbReference type="PANTHER" id="PTHR30607">
    <property type="entry name" value="POTASSIUM-TRANSPORTING ATPASE A CHAIN"/>
    <property type="match status" value="1"/>
</dbReference>
<dbReference type="PANTHER" id="PTHR30607:SF2">
    <property type="entry name" value="POTASSIUM-TRANSPORTING ATPASE POTASSIUM-BINDING SUBUNIT"/>
    <property type="match status" value="1"/>
</dbReference>
<dbReference type="Pfam" id="PF03814">
    <property type="entry name" value="KdpA"/>
    <property type="match status" value="1"/>
</dbReference>
<dbReference type="PIRSF" id="PIRSF001294">
    <property type="entry name" value="K_ATPaseA"/>
    <property type="match status" value="1"/>
</dbReference>
<accession>C4ZWH4</accession>
<sequence length="557" mass="59189">MAAQGFLLIATFLLVLMVLARPLGSGLARLINDIPLPGTTGVERVLFRALGVSDREMNWKQYLCAILGLNMLGLAVLFFMLLGQHYLPLNPQQLPGLSWDLALNTAVSFVTNTNWQSYSGETTLSYFSQMAGLTVQNFLSAASGIAVIFALIRAFTRQSMSTLGNAWVDLLRITLWVLVPVALLIALFFIQQGALQNFLPYQAVNTVEGAQQLLPMGPVASQEAIKMLGTNGGGFFNANSSHPFENPTALTNFVQMLAIFLIPTALCFAFGEVMGDRRQGRMLLWAMSVIFVICVGVVMWAEVQGNPHLLALGTDSSINMEGKESRFGVLVSSLFAVVTTAASCGAVIAMHDSFTALGGMVPMWLMQIGEVVFGGVGSGLYGMMLFVLLAVFIAGLMIGRTPEYLGKKIDVREMKLTALAILVTPTLVLMGAALAMMTDAGRSAMLNPGPHGFSEVLYAVSSAANNNGSAFAGLSANSPFWNCLLAFCMFVGRFGVIIPVMAIAGSLVSKKSQAASSGTLPTHGPLFVGLLIGTVLLVGALTFIPALALGPVAEYLS</sequence>
<keyword id="KW-0997">Cell inner membrane</keyword>
<keyword id="KW-1003">Cell membrane</keyword>
<keyword id="KW-0406">Ion transport</keyword>
<keyword id="KW-0472">Membrane</keyword>
<keyword id="KW-0630">Potassium</keyword>
<keyword id="KW-0633">Potassium transport</keyword>
<keyword id="KW-0812">Transmembrane</keyword>
<keyword id="KW-1133">Transmembrane helix</keyword>
<keyword id="KW-0813">Transport</keyword>
<feature type="chain" id="PRO_1000204784" description="Potassium-transporting ATPase potassium-binding subunit">
    <location>
        <begin position="1"/>
        <end position="557"/>
    </location>
</feature>
<feature type="transmembrane region" description="Helical" evidence="1">
    <location>
        <begin position="5"/>
        <end position="25"/>
    </location>
</feature>
<feature type="transmembrane region" description="Helical" evidence="1">
    <location>
        <begin position="63"/>
        <end position="83"/>
    </location>
</feature>
<feature type="transmembrane region" description="Helical" evidence="1">
    <location>
        <begin position="132"/>
        <end position="152"/>
    </location>
</feature>
<feature type="transmembrane region" description="Helical" evidence="1">
    <location>
        <begin position="170"/>
        <end position="190"/>
    </location>
</feature>
<feature type="transmembrane region" description="Helical" evidence="1">
    <location>
        <begin position="253"/>
        <end position="273"/>
    </location>
</feature>
<feature type="transmembrane region" description="Helical" evidence="1">
    <location>
        <begin position="283"/>
        <end position="303"/>
    </location>
</feature>
<feature type="transmembrane region" description="Helical" evidence="1">
    <location>
        <begin position="329"/>
        <end position="349"/>
    </location>
</feature>
<feature type="transmembrane region" description="Helical" evidence="1">
    <location>
        <begin position="356"/>
        <end position="376"/>
    </location>
</feature>
<feature type="transmembrane region" description="Helical" evidence="1">
    <location>
        <begin position="379"/>
        <end position="399"/>
    </location>
</feature>
<feature type="transmembrane region" description="Helical" evidence="1">
    <location>
        <begin position="416"/>
        <end position="436"/>
    </location>
</feature>
<feature type="transmembrane region" description="Helical" evidence="1">
    <location>
        <begin position="484"/>
        <end position="504"/>
    </location>
</feature>
<feature type="transmembrane region" description="Helical" evidence="1">
    <location>
        <begin position="526"/>
        <end position="546"/>
    </location>
</feature>
<protein>
    <recommendedName>
        <fullName evidence="1">Potassium-transporting ATPase potassium-binding subunit</fullName>
    </recommendedName>
    <alternativeName>
        <fullName evidence="1">ATP phosphohydrolase [potassium-transporting] A chain</fullName>
    </alternativeName>
    <alternativeName>
        <fullName evidence="1">Potassium-binding and translocating subunit A</fullName>
    </alternativeName>
    <alternativeName>
        <fullName evidence="1">Potassium-translocating ATPase A chain</fullName>
    </alternativeName>
</protein>
<reference key="1">
    <citation type="journal article" date="2009" name="J. Bacteriol.">
        <title>Genomic sequencing reveals regulatory mutations and recombinational events in the widely used MC4100 lineage of Escherichia coli K-12.</title>
        <authorList>
            <person name="Ferenci T."/>
            <person name="Zhou Z."/>
            <person name="Betteridge T."/>
            <person name="Ren Y."/>
            <person name="Liu Y."/>
            <person name="Feng L."/>
            <person name="Reeves P.R."/>
            <person name="Wang L."/>
        </authorList>
    </citation>
    <scope>NUCLEOTIDE SEQUENCE [LARGE SCALE GENOMIC DNA]</scope>
    <source>
        <strain>K12 / MC4100 / BW2952</strain>
    </source>
</reference>
<gene>
    <name evidence="1" type="primary">kdpA</name>
    <name type="ordered locus">BWG_0558</name>
</gene>